<comment type="function">
    <text evidence="1">Bifunctional enzyme with both catalase and broad-spectrum peroxidase activity.</text>
</comment>
<comment type="catalytic activity">
    <reaction evidence="1">
        <text>H2O2 + AH2 = A + 2 H2O</text>
        <dbReference type="Rhea" id="RHEA:30275"/>
        <dbReference type="ChEBI" id="CHEBI:13193"/>
        <dbReference type="ChEBI" id="CHEBI:15377"/>
        <dbReference type="ChEBI" id="CHEBI:16240"/>
        <dbReference type="ChEBI" id="CHEBI:17499"/>
        <dbReference type="EC" id="1.11.1.21"/>
    </reaction>
</comment>
<comment type="catalytic activity">
    <reaction evidence="1">
        <text>2 H2O2 = O2 + 2 H2O</text>
        <dbReference type="Rhea" id="RHEA:20309"/>
        <dbReference type="ChEBI" id="CHEBI:15377"/>
        <dbReference type="ChEBI" id="CHEBI:15379"/>
        <dbReference type="ChEBI" id="CHEBI:16240"/>
        <dbReference type="EC" id="1.11.1.21"/>
    </reaction>
</comment>
<comment type="cofactor">
    <cofactor evidence="1">
        <name>heme b</name>
        <dbReference type="ChEBI" id="CHEBI:60344"/>
    </cofactor>
    <text evidence="1">Binds 1 heme b (iron(II)-protoporphyrin IX) group per dimer.</text>
</comment>
<comment type="subunit">
    <text evidence="1">Homodimer or homotetramer.</text>
</comment>
<comment type="PTM">
    <text evidence="1">Formation of the three residue Trp-Tyr-Met cross-link is important for the catalase, but not the peroxidase activity of the enzyme.</text>
</comment>
<comment type="similarity">
    <text evidence="1">Belongs to the peroxidase family. Peroxidase/catalase subfamily.</text>
</comment>
<comment type="sequence caution" evidence="3">
    <conflict type="erroneous initiation">
        <sequence resource="EMBL-CDS" id="AAQ87566"/>
    </conflict>
    <text>Extended N-terminus.</text>
</comment>
<comment type="sequence caution" evidence="3">
    <conflict type="frameshift">
        <sequence resource="EMBL-CDS" id="AAQ87566"/>
    </conflict>
</comment>
<comment type="sequence caution" evidence="3">
    <conflict type="frameshift">
        <sequence resource="EMBL-CDS" id="ACP22099"/>
    </conflict>
</comment>
<proteinExistence type="inferred from homology"/>
<organism>
    <name type="scientific">Sinorhizobium fredii (strain NBRC 101917 / NGR234)</name>
    <dbReference type="NCBI Taxonomy" id="394"/>
    <lineage>
        <taxon>Bacteria</taxon>
        <taxon>Pseudomonadati</taxon>
        <taxon>Pseudomonadota</taxon>
        <taxon>Alphaproteobacteria</taxon>
        <taxon>Hyphomicrobiales</taxon>
        <taxon>Rhizobiaceae</taxon>
        <taxon>Sinorhizobium/Ensifer group</taxon>
        <taxon>Sinorhizobium</taxon>
    </lineage>
</organism>
<name>KATG_SINFN</name>
<keyword id="KW-0349">Heme</keyword>
<keyword id="KW-0376">Hydrogen peroxide</keyword>
<keyword id="KW-0408">Iron</keyword>
<keyword id="KW-0479">Metal-binding</keyword>
<keyword id="KW-0560">Oxidoreductase</keyword>
<keyword id="KW-0575">Peroxidase</keyword>
<keyword id="KW-0614">Plasmid</keyword>
<keyword id="KW-1185">Reference proteome</keyword>
<sequence>MDQKSDNAGKCPVAHTVPKGRSNRDWWPDQLDVQVLHQHSGLSDPMGKAFNYAEEFKKLDLEELKKDLHALMTESQDWWPADFGHYGGLFIRMAWHSAGTYRITDGRGGAGQGQQRFAPLNSWPDNANLDKARRLLWPIKQKYGNRISWADLMILTGNVALESMGFQTFGFAGGRADVWEPQELFWGPEGTWLGDERYSGERQLDEPLAAVQMGLIYVNPEGPNGNPDPVAAAREIRETFARMAMNDEETVALIAGGHTFGKTHGAGDPSFIGPDPEGGAIEDQGLGWKSTFGTGVGKDAITGGPEVTWSQTPTRWSNYFFENLFNYEWELTKSPAGAHQWKAKNADASIPDAFDASKKHVPTMLTTDLSLRFDPIYEKISRRFLENPDQFADAFARAWFKLTHRDMGPKVRYLGPEVPAEDLIWQDVIPAVDHKLVDENDVADLKGKVLASGLSVQELVSTAWASASTFRGSDKRGGANGARIRLAPQKDWEVNQPAQLARVLSVLEGIQKDFNTAHTGGKKISLADLIVLAGAAGVEKAAKAGGHDITVPFTPGRADASEAQTDAASFAALEPRADGFRNYVSRRRRQFMKPEEALVDRAQLLTLTAPELTVLVGGLRVVFTSRPEVLTNDFFVNLLDMGTQWSPMAEKEGVYEGRDRKTHEVKWTGTRVDLIFGSHSQLRALAEVYASSDAKEKFVGDFVAAWTKVMNADRFDLV</sequence>
<reference key="1">
    <citation type="journal article" date="2004" name="J. Bacteriol.">
        <title>An evolutionary hot spot: the pNGR234b replicon of Rhizobium sp. strain NGR234.</title>
        <authorList>
            <person name="Streit W.R."/>
            <person name="Schmitz R.A."/>
            <person name="Perret X."/>
            <person name="Staehelin C."/>
            <person name="Deakin W.J."/>
            <person name="Raasch C."/>
            <person name="Liesegang H."/>
            <person name="Broughton W.J."/>
        </authorList>
    </citation>
    <scope>NUCLEOTIDE SEQUENCE [LARGE SCALE GENOMIC DNA]</scope>
    <source>
        <strain>NBRC 101917 / NGR234</strain>
    </source>
</reference>
<reference key="2">
    <citation type="journal article" date="2009" name="Appl. Environ. Microbiol.">
        <title>Rhizobium sp. strain NGR234 possesses a remarkable number of secretion systems.</title>
        <authorList>
            <person name="Schmeisser C."/>
            <person name="Liesegang H."/>
            <person name="Krysciak D."/>
            <person name="Bakkou N."/>
            <person name="Le Quere A."/>
            <person name="Wollherr A."/>
            <person name="Heinemeyer I."/>
            <person name="Morgenstern B."/>
            <person name="Pommerening-Roeser A."/>
            <person name="Flores M."/>
            <person name="Palacios R."/>
            <person name="Brenner S."/>
            <person name="Gottschalk G."/>
            <person name="Schmitz R.A."/>
            <person name="Broughton W.J."/>
            <person name="Perret X."/>
            <person name="Strittmatter A.W."/>
            <person name="Streit W.R."/>
        </authorList>
    </citation>
    <scope>NUCLEOTIDE SEQUENCE [LARGE SCALE GENOMIC DNA]</scope>
    <source>
        <strain>NBRC 101917 / NGR234</strain>
    </source>
</reference>
<geneLocation type="plasmid">
    <name>sym pNGR234b</name>
</geneLocation>
<feature type="chain" id="PRO_0000354888" description="Catalase-peroxidase">
    <location>
        <begin position="1"/>
        <end position="718"/>
    </location>
</feature>
<feature type="region of interest" description="Disordered" evidence="2">
    <location>
        <begin position="1"/>
        <end position="24"/>
    </location>
</feature>
<feature type="active site" description="Proton acceptor" evidence="1">
    <location>
        <position position="96"/>
    </location>
</feature>
<feature type="binding site" description="axial binding residue" evidence="1">
    <location>
        <position position="258"/>
    </location>
    <ligand>
        <name>heme b</name>
        <dbReference type="ChEBI" id="CHEBI:60344"/>
    </ligand>
    <ligandPart>
        <name>Fe</name>
        <dbReference type="ChEBI" id="CHEBI:18248"/>
    </ligandPart>
</feature>
<feature type="site" description="Transition state stabilizer" evidence="1">
    <location>
        <position position="92"/>
    </location>
</feature>
<feature type="cross-link" description="Tryptophyl-tyrosyl-methioninium (Trp-Tyr) (with M-243)" evidence="1">
    <location>
        <begin position="95"/>
        <end position="217"/>
    </location>
</feature>
<feature type="cross-link" description="Tryptophyl-tyrosyl-methioninium (Tyr-Met) (with W-95)" evidence="1">
    <location>
        <begin position="217"/>
        <end position="243"/>
    </location>
</feature>
<dbReference type="EC" id="1.11.1.21" evidence="1"/>
<dbReference type="EMBL" id="AY316747">
    <property type="protein sequence ID" value="AAQ87566.1"/>
    <property type="status" value="ALT_FRAME"/>
    <property type="molecule type" value="Genomic_DNA"/>
</dbReference>
<dbReference type="EMBL" id="CP000874">
    <property type="protein sequence ID" value="ACP22099.1"/>
    <property type="status" value="ALT_FRAME"/>
    <property type="molecule type" value="Genomic_DNA"/>
</dbReference>
<dbReference type="RefSeq" id="YP_002822852.1">
    <property type="nucleotide sequence ID" value="NC_012586.1"/>
</dbReference>
<dbReference type="SMR" id="Q6W102"/>
<dbReference type="PeroxiBase" id="3569">
    <property type="entry name" value="RHspCP01_NGR234"/>
</dbReference>
<dbReference type="KEGG" id="rhi:NGR_b06410"/>
<dbReference type="PATRIC" id="fig|394.7.peg.1090"/>
<dbReference type="HOGENOM" id="CLU_025424_2_0_5"/>
<dbReference type="OrthoDB" id="9759743at2"/>
<dbReference type="Proteomes" id="UP000001054">
    <property type="component" value="Plasmid pNGR234b"/>
</dbReference>
<dbReference type="GO" id="GO:0005829">
    <property type="term" value="C:cytosol"/>
    <property type="evidence" value="ECO:0007669"/>
    <property type="project" value="TreeGrafter"/>
</dbReference>
<dbReference type="GO" id="GO:0004096">
    <property type="term" value="F:catalase activity"/>
    <property type="evidence" value="ECO:0007669"/>
    <property type="project" value="UniProtKB-UniRule"/>
</dbReference>
<dbReference type="GO" id="GO:0020037">
    <property type="term" value="F:heme binding"/>
    <property type="evidence" value="ECO:0007669"/>
    <property type="project" value="InterPro"/>
</dbReference>
<dbReference type="GO" id="GO:0046872">
    <property type="term" value="F:metal ion binding"/>
    <property type="evidence" value="ECO:0007669"/>
    <property type="project" value="UniProtKB-KW"/>
</dbReference>
<dbReference type="GO" id="GO:0070301">
    <property type="term" value="P:cellular response to hydrogen peroxide"/>
    <property type="evidence" value="ECO:0007669"/>
    <property type="project" value="TreeGrafter"/>
</dbReference>
<dbReference type="GO" id="GO:0042744">
    <property type="term" value="P:hydrogen peroxide catabolic process"/>
    <property type="evidence" value="ECO:0007669"/>
    <property type="project" value="UniProtKB-KW"/>
</dbReference>
<dbReference type="CDD" id="cd00649">
    <property type="entry name" value="catalase_peroxidase_1"/>
    <property type="match status" value="1"/>
</dbReference>
<dbReference type="CDD" id="cd08200">
    <property type="entry name" value="catalase_peroxidase_2"/>
    <property type="match status" value="1"/>
</dbReference>
<dbReference type="FunFam" id="1.10.420.10:FF:000002">
    <property type="entry name" value="Catalase-peroxidase"/>
    <property type="match status" value="1"/>
</dbReference>
<dbReference type="FunFam" id="1.10.520.10:FF:000002">
    <property type="entry name" value="Catalase-peroxidase"/>
    <property type="match status" value="1"/>
</dbReference>
<dbReference type="Gene3D" id="1.10.520.10">
    <property type="match status" value="2"/>
</dbReference>
<dbReference type="Gene3D" id="1.10.420.10">
    <property type="entry name" value="Peroxidase, domain 2"/>
    <property type="match status" value="2"/>
</dbReference>
<dbReference type="HAMAP" id="MF_01961">
    <property type="entry name" value="Catal_peroxid"/>
    <property type="match status" value="1"/>
</dbReference>
<dbReference type="InterPro" id="IPR000763">
    <property type="entry name" value="Catalase_peroxidase"/>
</dbReference>
<dbReference type="InterPro" id="IPR002016">
    <property type="entry name" value="Haem_peroxidase"/>
</dbReference>
<dbReference type="InterPro" id="IPR010255">
    <property type="entry name" value="Haem_peroxidase_sf"/>
</dbReference>
<dbReference type="InterPro" id="IPR019794">
    <property type="entry name" value="Peroxidases_AS"/>
</dbReference>
<dbReference type="InterPro" id="IPR019793">
    <property type="entry name" value="Peroxidases_heam-ligand_BS"/>
</dbReference>
<dbReference type="NCBIfam" id="TIGR00198">
    <property type="entry name" value="cat_per_HPI"/>
    <property type="match status" value="1"/>
</dbReference>
<dbReference type="NCBIfam" id="NF011635">
    <property type="entry name" value="PRK15061.1"/>
    <property type="match status" value="1"/>
</dbReference>
<dbReference type="PANTHER" id="PTHR30555:SF0">
    <property type="entry name" value="CATALASE-PEROXIDASE"/>
    <property type="match status" value="1"/>
</dbReference>
<dbReference type="PANTHER" id="PTHR30555">
    <property type="entry name" value="HYDROPEROXIDASE I, BIFUNCTIONAL CATALASE-PEROXIDASE"/>
    <property type="match status" value="1"/>
</dbReference>
<dbReference type="Pfam" id="PF00141">
    <property type="entry name" value="peroxidase"/>
    <property type="match status" value="2"/>
</dbReference>
<dbReference type="PRINTS" id="PR00460">
    <property type="entry name" value="BPEROXIDASE"/>
</dbReference>
<dbReference type="PRINTS" id="PR00458">
    <property type="entry name" value="PEROXIDASE"/>
</dbReference>
<dbReference type="SUPFAM" id="SSF48113">
    <property type="entry name" value="Heme-dependent peroxidases"/>
    <property type="match status" value="2"/>
</dbReference>
<dbReference type="PROSITE" id="PS00435">
    <property type="entry name" value="PEROXIDASE_1"/>
    <property type="match status" value="1"/>
</dbReference>
<dbReference type="PROSITE" id="PS00436">
    <property type="entry name" value="PEROXIDASE_2"/>
    <property type="match status" value="1"/>
</dbReference>
<dbReference type="PROSITE" id="PS50873">
    <property type="entry name" value="PEROXIDASE_4"/>
    <property type="match status" value="1"/>
</dbReference>
<accession>Q6W102</accession>
<accession>C3KPU1</accession>
<evidence type="ECO:0000255" key="1">
    <source>
        <dbReference type="HAMAP-Rule" id="MF_01961"/>
    </source>
</evidence>
<evidence type="ECO:0000256" key="2">
    <source>
        <dbReference type="SAM" id="MobiDB-lite"/>
    </source>
</evidence>
<evidence type="ECO:0000305" key="3"/>
<gene>
    <name evidence="1" type="primary">katG</name>
    <name type="ordered locus">NGR_b06410</name>
    <name type="ORF">RNGR00441</name>
</gene>
<protein>
    <recommendedName>
        <fullName evidence="1">Catalase-peroxidase</fullName>
        <shortName evidence="1">CP</shortName>
        <ecNumber evidence="1">1.11.1.21</ecNumber>
    </recommendedName>
    <alternativeName>
        <fullName evidence="1">Peroxidase/catalase</fullName>
    </alternativeName>
</protein>